<organism>
    <name type="scientific">Vibrio cholerae serotype O1 (strain ATCC 39315 / El Tor Inaba N16961)</name>
    <dbReference type="NCBI Taxonomy" id="243277"/>
    <lineage>
        <taxon>Bacteria</taxon>
        <taxon>Pseudomonadati</taxon>
        <taxon>Pseudomonadota</taxon>
        <taxon>Gammaproteobacteria</taxon>
        <taxon>Vibrionales</taxon>
        <taxon>Vibrionaceae</taxon>
        <taxon>Vibrio</taxon>
    </lineage>
</organism>
<comment type="function">
    <text evidence="2">Part of the processive rRNA transcription and antitermination complex (rrnTAC). The complex forms an RNA-chaperone ring around the RNA exit tunnel of RNA polymerase (RNAP). It supports rapid transcription and antitermination of rRNA operons, cotranscriptional rRNA folding, and annealing of distal rRNA regions to allow correct ribosome biogenesis. This subunit may play a central role in organizing the structure.</text>
</comment>
<comment type="catalytic activity">
    <reaction evidence="2">
        <text>a myo-inositol phosphate + H2O = myo-inositol + phosphate</text>
        <dbReference type="Rhea" id="RHEA:24056"/>
        <dbReference type="ChEBI" id="CHEBI:15377"/>
        <dbReference type="ChEBI" id="CHEBI:17268"/>
        <dbReference type="ChEBI" id="CHEBI:43474"/>
        <dbReference type="ChEBI" id="CHEBI:84139"/>
        <dbReference type="EC" id="3.1.3.25"/>
    </reaction>
</comment>
<comment type="cofactor">
    <cofactor evidence="2">
        <name>Mg(2+)</name>
        <dbReference type="ChEBI" id="CHEBI:18420"/>
    </cofactor>
</comment>
<comment type="subunit">
    <text evidence="2">Homodimer. The rRNA transcription and antitermination complex (rrnTAC) consists of RNA polymerase (RNAP), NusA, NusB, NusE (rpsJ), NusG, SubB, ribosomal protein S4, DNA and precursor rRNA; S4 is more flexible than other subunits.</text>
</comment>
<comment type="subcellular location">
    <subcellularLocation>
        <location evidence="2">Cytoplasm</location>
    </subcellularLocation>
</comment>
<comment type="similarity">
    <text evidence="3">Belongs to the inositol monophosphatase superfamily.</text>
</comment>
<comment type="sequence caution" evidence="3">
    <conflict type="erroneous initiation">
        <sequence resource="EMBL-CDS" id="AAF93910"/>
    </conflict>
    <text>Extended N-terminus.</text>
</comment>
<accession>Q9KTY5</accession>
<evidence type="ECO:0000250" key="1"/>
<evidence type="ECO:0000250" key="2">
    <source>
        <dbReference type="UniProtKB" id="P0ADG4"/>
    </source>
</evidence>
<evidence type="ECO:0000305" key="3"/>
<gene>
    <name type="ordered locus">VC_0745</name>
</gene>
<name>SUHB_VIBCH</name>
<dbReference type="EC" id="3.1.3.25" evidence="2"/>
<dbReference type="EMBL" id="AE003852">
    <property type="protein sequence ID" value="AAF93910.1"/>
    <property type="status" value="ALT_INIT"/>
    <property type="molecule type" value="Genomic_DNA"/>
</dbReference>
<dbReference type="PIR" id="D82285">
    <property type="entry name" value="D82285"/>
</dbReference>
<dbReference type="RefSeq" id="NP_230394.2">
    <property type="nucleotide sequence ID" value="NC_002505.1"/>
</dbReference>
<dbReference type="SMR" id="Q9KTY5"/>
<dbReference type="STRING" id="243277.VC_0745"/>
<dbReference type="DNASU" id="2615754"/>
<dbReference type="EnsemblBacteria" id="AAF93910">
    <property type="protein sequence ID" value="AAF93910"/>
    <property type="gene ID" value="VC_0745"/>
</dbReference>
<dbReference type="KEGG" id="vch:VC_0745"/>
<dbReference type="PATRIC" id="fig|243277.26.peg.709"/>
<dbReference type="eggNOG" id="COG0483">
    <property type="taxonomic scope" value="Bacteria"/>
</dbReference>
<dbReference type="HOGENOM" id="CLU_044118_0_4_6"/>
<dbReference type="Proteomes" id="UP000000584">
    <property type="component" value="Chromosome 1"/>
</dbReference>
<dbReference type="GO" id="GO:0005737">
    <property type="term" value="C:cytoplasm"/>
    <property type="evidence" value="ECO:0007669"/>
    <property type="project" value="UniProtKB-SubCell"/>
</dbReference>
<dbReference type="GO" id="GO:0008934">
    <property type="term" value="F:inositol monophosphate 1-phosphatase activity"/>
    <property type="evidence" value="ECO:0000318"/>
    <property type="project" value="GO_Central"/>
</dbReference>
<dbReference type="GO" id="GO:0046872">
    <property type="term" value="F:metal ion binding"/>
    <property type="evidence" value="ECO:0007669"/>
    <property type="project" value="UniProtKB-KW"/>
</dbReference>
<dbReference type="GO" id="GO:0003723">
    <property type="term" value="F:RNA binding"/>
    <property type="evidence" value="ECO:0007669"/>
    <property type="project" value="UniProtKB-KW"/>
</dbReference>
<dbReference type="GO" id="GO:0006020">
    <property type="term" value="P:inositol metabolic process"/>
    <property type="evidence" value="ECO:0000318"/>
    <property type="project" value="GO_Central"/>
</dbReference>
<dbReference type="GO" id="GO:0046854">
    <property type="term" value="P:phosphatidylinositol phosphate biosynthetic process"/>
    <property type="evidence" value="ECO:0007669"/>
    <property type="project" value="InterPro"/>
</dbReference>
<dbReference type="GO" id="GO:0042254">
    <property type="term" value="P:ribosome biogenesis"/>
    <property type="evidence" value="ECO:0007669"/>
    <property type="project" value="UniProtKB-KW"/>
</dbReference>
<dbReference type="GO" id="GO:0007165">
    <property type="term" value="P:signal transduction"/>
    <property type="evidence" value="ECO:0000318"/>
    <property type="project" value="GO_Central"/>
</dbReference>
<dbReference type="GO" id="GO:0031564">
    <property type="term" value="P:transcription antitermination"/>
    <property type="evidence" value="ECO:0007669"/>
    <property type="project" value="UniProtKB-KW"/>
</dbReference>
<dbReference type="CDD" id="cd01639">
    <property type="entry name" value="IMPase"/>
    <property type="match status" value="1"/>
</dbReference>
<dbReference type="FunFam" id="3.30.540.10:FF:000003">
    <property type="entry name" value="Inositol-1-monophosphatase"/>
    <property type="match status" value="1"/>
</dbReference>
<dbReference type="FunFam" id="3.40.190.80:FF:000004">
    <property type="entry name" value="Inositol-1-monophosphatase"/>
    <property type="match status" value="1"/>
</dbReference>
<dbReference type="Gene3D" id="3.40.190.80">
    <property type="match status" value="1"/>
</dbReference>
<dbReference type="Gene3D" id="3.30.540.10">
    <property type="entry name" value="Fructose-1,6-Bisphosphatase, subunit A, domain 1"/>
    <property type="match status" value="1"/>
</dbReference>
<dbReference type="InterPro" id="IPR033942">
    <property type="entry name" value="IMPase"/>
</dbReference>
<dbReference type="InterPro" id="IPR020583">
    <property type="entry name" value="Inositol_monoP_metal-BS"/>
</dbReference>
<dbReference type="InterPro" id="IPR000760">
    <property type="entry name" value="Inositol_monophosphatase-like"/>
</dbReference>
<dbReference type="InterPro" id="IPR020550">
    <property type="entry name" value="Inositol_monophosphatase_CS"/>
</dbReference>
<dbReference type="InterPro" id="IPR022337">
    <property type="entry name" value="Inositol_monophosphatase_SuhB"/>
</dbReference>
<dbReference type="NCBIfam" id="NF008027">
    <property type="entry name" value="PRK10757.1"/>
    <property type="match status" value="1"/>
</dbReference>
<dbReference type="PANTHER" id="PTHR20854">
    <property type="entry name" value="INOSITOL MONOPHOSPHATASE"/>
    <property type="match status" value="1"/>
</dbReference>
<dbReference type="PANTHER" id="PTHR20854:SF4">
    <property type="entry name" value="INOSITOL-1-MONOPHOSPHATASE-RELATED"/>
    <property type="match status" value="1"/>
</dbReference>
<dbReference type="Pfam" id="PF00459">
    <property type="entry name" value="Inositol_P"/>
    <property type="match status" value="1"/>
</dbReference>
<dbReference type="PRINTS" id="PR00377">
    <property type="entry name" value="IMPHPHTASES"/>
</dbReference>
<dbReference type="PRINTS" id="PR01959">
    <property type="entry name" value="SBIMPHPHTASE"/>
</dbReference>
<dbReference type="SUPFAM" id="SSF56655">
    <property type="entry name" value="Carbohydrate phosphatase"/>
    <property type="match status" value="1"/>
</dbReference>
<dbReference type="PROSITE" id="PS00629">
    <property type="entry name" value="IMP_1"/>
    <property type="match status" value="1"/>
</dbReference>
<dbReference type="PROSITE" id="PS00630">
    <property type="entry name" value="IMP_2"/>
    <property type="match status" value="1"/>
</dbReference>
<sequence length="267" mass="29088">MHPMLNIAIRAARKAGNHIAKSLENAEKIQTTQKGSNDFVTNVDKEAEAIIVSTIKSSYPEHCIIAEEGGLIEGKDKEVQWIIDPLDGTTNFVKGFPHFAVSIAVRFRGKTEVACVYDPMTNELFTAQRGAGAQLNNARIRVQPIKDLQGAVLATAFPFKQKQHSESFMKILSAMFVECADFRRTGSAALDLCYLAANRVDGYFELGLKPWDMAAGELIAREAGAIVTDFAGGTDYMQSGNIVASSPRGVKAILQHIRENGNSAILK</sequence>
<keyword id="KW-0143">Chaperone</keyword>
<keyword id="KW-0963">Cytoplasm</keyword>
<keyword id="KW-0378">Hydrolase</keyword>
<keyword id="KW-0460">Magnesium</keyword>
<keyword id="KW-0479">Metal-binding</keyword>
<keyword id="KW-1185">Reference proteome</keyword>
<keyword id="KW-0690">Ribosome biogenesis</keyword>
<keyword id="KW-0694">RNA-binding</keyword>
<keyword id="KW-0804">Transcription</keyword>
<keyword id="KW-0889">Transcription antitermination</keyword>
<keyword id="KW-0805">Transcription regulation</keyword>
<reference key="1">
    <citation type="journal article" date="2000" name="Nature">
        <title>DNA sequence of both chromosomes of the cholera pathogen Vibrio cholerae.</title>
        <authorList>
            <person name="Heidelberg J.F."/>
            <person name="Eisen J.A."/>
            <person name="Nelson W.C."/>
            <person name="Clayton R.A."/>
            <person name="Gwinn M.L."/>
            <person name="Dodson R.J."/>
            <person name="Haft D.H."/>
            <person name="Hickey E.K."/>
            <person name="Peterson J.D."/>
            <person name="Umayam L.A."/>
            <person name="Gill S.R."/>
            <person name="Nelson K.E."/>
            <person name="Read T.D."/>
            <person name="Tettelin H."/>
            <person name="Richardson D.L."/>
            <person name="Ermolaeva M.D."/>
            <person name="Vamathevan J.J."/>
            <person name="Bass S."/>
            <person name="Qin H."/>
            <person name="Dragoi I."/>
            <person name="Sellers P."/>
            <person name="McDonald L.A."/>
            <person name="Utterback T.R."/>
            <person name="Fleischmann R.D."/>
            <person name="Nierman W.C."/>
            <person name="White O."/>
            <person name="Salzberg S.L."/>
            <person name="Smith H.O."/>
            <person name="Colwell R.R."/>
            <person name="Mekalanos J.J."/>
            <person name="Venter J.C."/>
            <person name="Fraser C.M."/>
        </authorList>
    </citation>
    <scope>NUCLEOTIDE SEQUENCE [LARGE SCALE GENOMIC DNA]</scope>
    <source>
        <strain>ATCC 39315 / El Tor Inaba N16961</strain>
    </source>
</reference>
<protein>
    <recommendedName>
        <fullName evidence="2">Nus factor SuhB</fullName>
    </recommendedName>
    <alternativeName>
        <fullName>Inositol-1-monophosphatase</fullName>
        <shortName>I-1-Pase</shortName>
        <shortName>IMPase</shortName>
        <shortName>Inositol-1-phosphatase</shortName>
        <ecNumber evidence="2">3.1.3.25</ecNumber>
    </alternativeName>
</protein>
<feature type="chain" id="PRO_0000142575" description="Nus factor SuhB">
    <location>
        <begin position="1"/>
        <end position="267"/>
    </location>
</feature>
<feature type="binding site" evidence="2">
    <location>
        <position position="67"/>
    </location>
    <ligand>
        <name>Mg(2+)</name>
        <dbReference type="ChEBI" id="CHEBI:18420"/>
    </ligand>
</feature>
<feature type="binding site" evidence="1">
    <location>
        <position position="67"/>
    </location>
    <ligand>
        <name>substrate</name>
    </ligand>
</feature>
<feature type="binding site" evidence="2">
    <location>
        <position position="84"/>
    </location>
    <ligand>
        <name>Mg(2+)</name>
        <dbReference type="ChEBI" id="CHEBI:18420"/>
    </ligand>
</feature>
<feature type="binding site" evidence="1">
    <location>
        <begin position="86"/>
        <end position="89"/>
    </location>
    <ligand>
        <name>substrate</name>
    </ligand>
</feature>
<feature type="binding site" evidence="2">
    <location>
        <position position="86"/>
    </location>
    <ligand>
        <name>Mg(2+)</name>
        <dbReference type="ChEBI" id="CHEBI:18420"/>
    </ligand>
</feature>
<feature type="binding site" evidence="1">
    <location>
        <position position="183"/>
    </location>
    <ligand>
        <name>substrate</name>
    </ligand>
</feature>
<feature type="binding site" evidence="1">
    <location>
        <position position="212"/>
    </location>
    <ligand>
        <name>substrate</name>
    </ligand>
</feature>
<proteinExistence type="inferred from homology"/>